<accession>Q752U5</accession>
<keyword id="KW-1185">Reference proteome</keyword>
<keyword id="KW-0687">Ribonucleoprotein</keyword>
<keyword id="KW-0689">Ribosomal protein</keyword>
<name>RL30_EREGS</name>
<dbReference type="EMBL" id="AE016819">
    <property type="protein sequence ID" value="AAS53849.1"/>
    <property type="molecule type" value="Genomic_DNA"/>
</dbReference>
<dbReference type="RefSeq" id="NP_986025.1">
    <property type="nucleotide sequence ID" value="NM_212161.1"/>
</dbReference>
<dbReference type="SMR" id="Q752U5"/>
<dbReference type="FunCoup" id="Q752U5">
    <property type="interactions" value="1326"/>
</dbReference>
<dbReference type="STRING" id="284811.Q752U5"/>
<dbReference type="EnsemblFungi" id="AAS53849">
    <property type="protein sequence ID" value="AAS53849"/>
    <property type="gene ID" value="AGOS_AFR478W"/>
</dbReference>
<dbReference type="GeneID" id="4622304"/>
<dbReference type="KEGG" id="ago:AGOS_AFR478W"/>
<dbReference type="eggNOG" id="KOG2988">
    <property type="taxonomic scope" value="Eukaryota"/>
</dbReference>
<dbReference type="HOGENOM" id="CLU_130502_0_1_1"/>
<dbReference type="InParanoid" id="Q752U5"/>
<dbReference type="OMA" id="YFQGGNN"/>
<dbReference type="OrthoDB" id="1928736at2759"/>
<dbReference type="Proteomes" id="UP000000591">
    <property type="component" value="Chromosome VI"/>
</dbReference>
<dbReference type="GO" id="GO:0022625">
    <property type="term" value="C:cytosolic large ribosomal subunit"/>
    <property type="evidence" value="ECO:0000318"/>
    <property type="project" value="GO_Central"/>
</dbReference>
<dbReference type="GO" id="GO:0030627">
    <property type="term" value="F:pre-mRNA 5'-splice site binding"/>
    <property type="evidence" value="ECO:0007669"/>
    <property type="project" value="EnsemblFungi"/>
</dbReference>
<dbReference type="GO" id="GO:0003723">
    <property type="term" value="F:RNA binding"/>
    <property type="evidence" value="ECO:0000318"/>
    <property type="project" value="GO_Central"/>
</dbReference>
<dbReference type="GO" id="GO:0003735">
    <property type="term" value="F:structural constituent of ribosome"/>
    <property type="evidence" value="ECO:0000318"/>
    <property type="project" value="GO_Central"/>
</dbReference>
<dbReference type="GO" id="GO:0048025">
    <property type="term" value="P:negative regulation of mRNA splicing, via spliceosome"/>
    <property type="evidence" value="ECO:0007669"/>
    <property type="project" value="EnsemblFungi"/>
</dbReference>
<dbReference type="GO" id="GO:0006364">
    <property type="term" value="P:rRNA processing"/>
    <property type="evidence" value="ECO:0007669"/>
    <property type="project" value="EnsemblFungi"/>
</dbReference>
<dbReference type="FunFam" id="3.30.1330.30:FF:000001">
    <property type="entry name" value="60S ribosomal protein L30"/>
    <property type="match status" value="1"/>
</dbReference>
<dbReference type="Gene3D" id="3.30.1330.30">
    <property type="match status" value="1"/>
</dbReference>
<dbReference type="InterPro" id="IPR039109">
    <property type="entry name" value="Ribosomal_eL30-like"/>
</dbReference>
<dbReference type="InterPro" id="IPR029064">
    <property type="entry name" value="Ribosomal_eL30-like_sf"/>
</dbReference>
<dbReference type="InterPro" id="IPR022991">
    <property type="entry name" value="Ribosomal_eL30_CS"/>
</dbReference>
<dbReference type="InterPro" id="IPR004038">
    <property type="entry name" value="Ribosomal_eL8/eL30/eS12/Gad45"/>
</dbReference>
<dbReference type="NCBIfam" id="NF002172">
    <property type="entry name" value="PRK01018.1"/>
    <property type="match status" value="1"/>
</dbReference>
<dbReference type="PANTHER" id="PTHR11449">
    <property type="entry name" value="RIBOSOMAL PROTEIN L30"/>
    <property type="match status" value="1"/>
</dbReference>
<dbReference type="Pfam" id="PF01248">
    <property type="entry name" value="Ribosomal_L7Ae"/>
    <property type="match status" value="1"/>
</dbReference>
<dbReference type="SUPFAM" id="SSF55315">
    <property type="entry name" value="L30e-like"/>
    <property type="match status" value="1"/>
</dbReference>
<dbReference type="PROSITE" id="PS00709">
    <property type="entry name" value="RIBOSOMAL_L30E_1"/>
    <property type="match status" value="1"/>
</dbReference>
<dbReference type="PROSITE" id="PS00993">
    <property type="entry name" value="RIBOSOMAL_L30E_2"/>
    <property type="match status" value="1"/>
</dbReference>
<proteinExistence type="inferred from homology"/>
<evidence type="ECO:0000250" key="1"/>
<evidence type="ECO:0000305" key="2"/>
<reference key="1">
    <citation type="journal article" date="2004" name="Science">
        <title>The Ashbya gossypii genome as a tool for mapping the ancient Saccharomyces cerevisiae genome.</title>
        <authorList>
            <person name="Dietrich F.S."/>
            <person name="Voegeli S."/>
            <person name="Brachat S."/>
            <person name="Lerch A."/>
            <person name="Gates K."/>
            <person name="Steiner S."/>
            <person name="Mohr C."/>
            <person name="Poehlmann R."/>
            <person name="Luedi P."/>
            <person name="Choi S."/>
            <person name="Wing R.A."/>
            <person name="Flavier A."/>
            <person name="Gaffney T.D."/>
            <person name="Philippsen P."/>
        </authorList>
    </citation>
    <scope>NUCLEOTIDE SEQUENCE [LARGE SCALE GENOMIC DNA]</scope>
    <source>
        <strain>ATCC 10895 / CBS 109.51 / FGSC 9923 / NRRL Y-1056</strain>
    </source>
</reference>
<reference key="2">
    <citation type="journal article" date="2013" name="G3 (Bethesda)">
        <title>Genomes of Ashbya fungi isolated from insects reveal four mating-type loci, numerous translocations, lack of transposons, and distinct gene duplications.</title>
        <authorList>
            <person name="Dietrich F.S."/>
            <person name="Voegeli S."/>
            <person name="Kuo S."/>
            <person name="Philippsen P."/>
        </authorList>
    </citation>
    <scope>GENOME REANNOTATION</scope>
    <source>
        <strain>ATCC 10895 / CBS 109.51 / FGSC 9923 / NRRL Y-1056</strain>
    </source>
</reference>
<sequence>MAPAKNQENINQKLALVIKSGKYTLGYKSTIKSLRQGKAKLIIIAANTPVLRKSELEYYAMLSKTKVYYFQGGNNELGTAVGKLFRVGVVTVLDAGDSDILTTLA</sequence>
<comment type="similarity">
    <text evidence="2">Belongs to the eukaryotic ribosomal protein eL30 family.</text>
</comment>
<feature type="initiator methionine" description="Removed" evidence="1">
    <location>
        <position position="1"/>
    </location>
</feature>
<feature type="chain" id="PRO_0000146136" description="Large ribosomal subunit protein eL30">
    <location>
        <begin position="2"/>
        <end position="105"/>
    </location>
</feature>
<protein>
    <recommendedName>
        <fullName evidence="2">Large ribosomal subunit protein eL30</fullName>
    </recommendedName>
    <alternativeName>
        <fullName>60S ribosomal protein L30</fullName>
    </alternativeName>
</protein>
<gene>
    <name type="primary">RPL30</name>
    <name type="ordered locus">AFR478W</name>
</gene>
<organism>
    <name type="scientific">Eremothecium gossypii (strain ATCC 10895 / CBS 109.51 / FGSC 9923 / NRRL Y-1056)</name>
    <name type="common">Yeast</name>
    <name type="synonym">Ashbya gossypii</name>
    <dbReference type="NCBI Taxonomy" id="284811"/>
    <lineage>
        <taxon>Eukaryota</taxon>
        <taxon>Fungi</taxon>
        <taxon>Dikarya</taxon>
        <taxon>Ascomycota</taxon>
        <taxon>Saccharomycotina</taxon>
        <taxon>Saccharomycetes</taxon>
        <taxon>Saccharomycetales</taxon>
        <taxon>Saccharomycetaceae</taxon>
        <taxon>Eremothecium</taxon>
    </lineage>
</organism>